<evidence type="ECO:0000255" key="1">
    <source>
        <dbReference type="HAMAP-Rule" id="MF_01078"/>
    </source>
</evidence>
<evidence type="ECO:0000269" key="2">
    <source>
    </source>
</evidence>
<evidence type="ECO:0000303" key="3">
    <source>
    </source>
</evidence>
<evidence type="ECO:0000305" key="4">
    <source>
    </source>
</evidence>
<dbReference type="EC" id="3.1.26.5" evidence="1 2"/>
<dbReference type="EMBL" id="AE000666">
    <property type="protein sequence ID" value="AAB84749.1"/>
    <property type="molecule type" value="Genomic_DNA"/>
</dbReference>
<dbReference type="PIR" id="D69130">
    <property type="entry name" value="D69130"/>
</dbReference>
<dbReference type="RefSeq" id="WP_010875882.1">
    <property type="nucleotide sequence ID" value="NC_000916.1"/>
</dbReference>
<dbReference type="SMR" id="O26345"/>
<dbReference type="STRING" id="187420.MTH_243"/>
<dbReference type="PaxDb" id="187420-MTH_243"/>
<dbReference type="EnsemblBacteria" id="AAB84749">
    <property type="protein sequence ID" value="AAB84749"/>
    <property type="gene ID" value="MTH_243"/>
</dbReference>
<dbReference type="KEGG" id="mth:MTH_243"/>
<dbReference type="PATRIC" id="fig|187420.15.peg.212"/>
<dbReference type="HOGENOM" id="CLU_109672_0_0_2"/>
<dbReference type="InParanoid" id="O26345"/>
<dbReference type="Proteomes" id="UP000005223">
    <property type="component" value="Chromosome"/>
</dbReference>
<dbReference type="GO" id="GO:0004526">
    <property type="term" value="F:ribonuclease P activity"/>
    <property type="evidence" value="ECO:0007669"/>
    <property type="project" value="UniProtKB-UniRule"/>
</dbReference>
<dbReference type="GO" id="GO:0001682">
    <property type="term" value="P:tRNA 5'-leader removal"/>
    <property type="evidence" value="ECO:0007669"/>
    <property type="project" value="UniProtKB-UniRule"/>
</dbReference>
<dbReference type="CDD" id="cd18691">
    <property type="entry name" value="PIN_VapC-like"/>
    <property type="match status" value="1"/>
</dbReference>
<dbReference type="HAMAP" id="MF_01078">
    <property type="entry name" value="RNA_free_RNase_P"/>
    <property type="match status" value="1"/>
</dbReference>
<dbReference type="InterPro" id="IPR014856">
    <property type="entry name" value="RNA_free_RNase_P"/>
</dbReference>
<dbReference type="NCBIfam" id="NF003343">
    <property type="entry name" value="PRK04358.1-4"/>
    <property type="match status" value="1"/>
</dbReference>
<dbReference type="NCBIfam" id="TIGR03875">
    <property type="entry name" value="RNA_lig_partner"/>
    <property type="match status" value="1"/>
</dbReference>
<dbReference type="PANTHER" id="PTHR41173:SF1">
    <property type="entry name" value="RNA-FREE RIBONUCLEASE P"/>
    <property type="match status" value="1"/>
</dbReference>
<dbReference type="PANTHER" id="PTHR41173">
    <property type="entry name" value="UPF0278 PROTEIN TK1425"/>
    <property type="match status" value="1"/>
</dbReference>
<dbReference type="Pfam" id="PF08745">
    <property type="entry name" value="PIN_5"/>
    <property type="match status" value="1"/>
</dbReference>
<feature type="chain" id="PRO_0000136083" description="RNA-free ribonuclease P">
    <location>
        <begin position="1"/>
        <end position="220"/>
    </location>
</feature>
<organism>
    <name type="scientific">Methanothermobacter thermautotrophicus (strain ATCC 29096 / DSM 1053 / JCM 10044 / NBRC 100330 / Delta H)</name>
    <name type="common">Methanobacterium thermoautotrophicum</name>
    <dbReference type="NCBI Taxonomy" id="187420"/>
    <lineage>
        <taxon>Archaea</taxon>
        <taxon>Methanobacteriati</taxon>
        <taxon>Methanobacteriota</taxon>
        <taxon>Methanomada group</taxon>
        <taxon>Methanobacteria</taxon>
        <taxon>Methanobacteriales</taxon>
        <taxon>Methanobacteriaceae</taxon>
        <taxon>Methanothermobacter</taxon>
    </lineage>
</organism>
<proteinExistence type="evidence at protein level"/>
<protein>
    <recommendedName>
        <fullName evidence="1 3">RNA-free ribonuclease P</fullName>
        <shortName evidence="1 3">RNA-free RNase P</shortName>
        <ecNumber evidence="1 2">3.1.26.5</ecNumber>
    </recommendedName>
    <alternativeName>
        <fullName evidence="1 3">Protein-only RNase P</fullName>
    </alternativeName>
</protein>
<keyword id="KW-0255">Endonuclease</keyword>
<keyword id="KW-0378">Hydrolase</keyword>
<keyword id="KW-0540">Nuclease</keyword>
<keyword id="KW-1185">Reference proteome</keyword>
<keyword id="KW-0819">tRNA processing</keyword>
<sequence length="220" mass="25461">MLAKQRFVLDTTAFTDNQLRELLGDGDLNLSVDRMLDLIARSRIKLNISCHMPPITYKEFTDYMTRYDCPEETLIKAETWIVKKTPNRYDTQIPSQIFYEYVHDIRERMNKGLRISETLLWEAGIQSIIMASRDVKKTEIESEVLGKAIKDLRKKYRSALRKGTLDSAPDLDVLLLAKELGAGVVAADDGIRVWAERLGLRFLNATSFPKMLKEYLKYYE</sequence>
<gene>
    <name type="ordered locus">MTH_243</name>
</gene>
<name>RFRNP_METTH</name>
<comment type="function">
    <text evidence="1 2">RNA-free RNase P that catalyzes the removal of the 5'-leader sequence from pre-tRNA to produce the mature 5'-terminus.</text>
</comment>
<comment type="catalytic activity">
    <reaction evidence="1 2">
        <text>Endonucleolytic cleavage of RNA, removing 5'-extranucleotides from tRNA precursor.</text>
        <dbReference type="EC" id="3.1.26.5"/>
    </reaction>
</comment>
<comment type="similarity">
    <text evidence="1 4">Belongs to the HARP family.</text>
</comment>
<reference key="1">
    <citation type="journal article" date="1997" name="J. Bacteriol.">
        <title>Complete genome sequence of Methanobacterium thermoautotrophicum deltaH: functional analysis and comparative genomics.</title>
        <authorList>
            <person name="Smith D.R."/>
            <person name="Doucette-Stamm L.A."/>
            <person name="Deloughery C."/>
            <person name="Lee H.-M."/>
            <person name="Dubois J."/>
            <person name="Aldredge T."/>
            <person name="Bashirzadeh R."/>
            <person name="Blakely D."/>
            <person name="Cook R."/>
            <person name="Gilbert K."/>
            <person name="Harrison D."/>
            <person name="Hoang L."/>
            <person name="Keagle P."/>
            <person name="Lumm W."/>
            <person name="Pothier B."/>
            <person name="Qiu D."/>
            <person name="Spadafora R."/>
            <person name="Vicare R."/>
            <person name="Wang Y."/>
            <person name="Wierzbowski J."/>
            <person name="Gibson R."/>
            <person name="Jiwani N."/>
            <person name="Caruso A."/>
            <person name="Bush D."/>
            <person name="Safer H."/>
            <person name="Patwell D."/>
            <person name="Prabhakar S."/>
            <person name="McDougall S."/>
            <person name="Shimer G."/>
            <person name="Goyal A."/>
            <person name="Pietrovski S."/>
            <person name="Church G.M."/>
            <person name="Daniels C.J."/>
            <person name="Mao J.-I."/>
            <person name="Rice P."/>
            <person name="Noelling J."/>
            <person name="Reeve J.N."/>
        </authorList>
    </citation>
    <scope>NUCLEOTIDE SEQUENCE [LARGE SCALE GENOMIC DNA]</scope>
    <source>
        <strain>ATCC 29096 / DSM 1053 / JCM 10044 / NBRC 100330 / Delta H</strain>
    </source>
</reference>
<reference key="2">
    <citation type="journal article" date="2017" name="Proc. Natl. Acad. Sci. U.S.A.">
        <title>Minimal and RNA-free RNase P in Aquifex aeolicus.</title>
        <authorList>
            <person name="Nickel A.I."/>
            <person name="Waeber N.B."/>
            <person name="Goessringer M."/>
            <person name="Lechner M."/>
            <person name="Linne U."/>
            <person name="Toth U."/>
            <person name="Rossmanith W."/>
            <person name="Hartmann R.K."/>
        </authorList>
    </citation>
    <scope>FUNCTION</scope>
    <scope>CATALYTIC ACTIVITY</scope>
</reference>
<accession>O26345</accession>